<name>RS4_RICTY</name>
<accession>Q68X27</accession>
<reference key="1">
    <citation type="journal article" date="2004" name="J. Bacteriol.">
        <title>Complete genome sequence of Rickettsia typhi and comparison with sequences of other Rickettsiae.</title>
        <authorList>
            <person name="McLeod M.P."/>
            <person name="Qin X."/>
            <person name="Karpathy S.E."/>
            <person name="Gioia J."/>
            <person name="Highlander S.K."/>
            <person name="Fox G.E."/>
            <person name="McNeill T.Z."/>
            <person name="Jiang H."/>
            <person name="Muzny D."/>
            <person name="Jacob L.S."/>
            <person name="Hawes A.C."/>
            <person name="Sodergren E."/>
            <person name="Gill R."/>
            <person name="Hume J."/>
            <person name="Morgan M."/>
            <person name="Fan G."/>
            <person name="Amin A.G."/>
            <person name="Gibbs R.A."/>
            <person name="Hong C."/>
            <person name="Yu X.-J."/>
            <person name="Walker D.H."/>
            <person name="Weinstock G.M."/>
        </authorList>
    </citation>
    <scope>NUCLEOTIDE SEQUENCE [LARGE SCALE GENOMIC DNA]</scope>
    <source>
        <strain>ATCC VR-144 / Wilmington</strain>
    </source>
</reference>
<gene>
    <name evidence="1" type="primary">rpsD</name>
    <name type="ordered locus">RT0335</name>
</gene>
<keyword id="KW-0687">Ribonucleoprotein</keyword>
<keyword id="KW-0689">Ribosomal protein</keyword>
<keyword id="KW-0694">RNA-binding</keyword>
<keyword id="KW-0699">rRNA-binding</keyword>
<evidence type="ECO:0000255" key="1">
    <source>
        <dbReference type="HAMAP-Rule" id="MF_01306"/>
    </source>
</evidence>
<evidence type="ECO:0000305" key="2"/>
<proteinExistence type="inferred from homology"/>
<protein>
    <recommendedName>
        <fullName evidence="1">Small ribosomal subunit protein uS4</fullName>
    </recommendedName>
    <alternativeName>
        <fullName evidence="2">30S ribosomal protein S4</fullName>
    </alternativeName>
</protein>
<comment type="function">
    <text evidence="1">One of the primary rRNA binding proteins, it binds directly to 16S rRNA where it nucleates assembly of the body of the 30S subunit.</text>
</comment>
<comment type="function">
    <text evidence="1">With S5 and S12 plays an important role in translational accuracy.</text>
</comment>
<comment type="subunit">
    <text evidence="1">Part of the 30S ribosomal subunit. Contacts protein S5. The interaction surface between S4 and S5 is involved in control of translational fidelity.</text>
</comment>
<comment type="similarity">
    <text evidence="1">Belongs to the universal ribosomal protein uS4 family.</text>
</comment>
<feature type="chain" id="PRO_0000132448" description="Small ribosomal subunit protein uS4">
    <location>
        <begin position="1"/>
        <end position="205"/>
    </location>
</feature>
<feature type="domain" description="S4 RNA-binding" evidence="1">
    <location>
        <begin position="94"/>
        <end position="157"/>
    </location>
</feature>
<organism>
    <name type="scientific">Rickettsia typhi (strain ATCC VR-144 / Wilmington)</name>
    <dbReference type="NCBI Taxonomy" id="257363"/>
    <lineage>
        <taxon>Bacteria</taxon>
        <taxon>Pseudomonadati</taxon>
        <taxon>Pseudomonadota</taxon>
        <taxon>Alphaproteobacteria</taxon>
        <taxon>Rickettsiales</taxon>
        <taxon>Rickettsiaceae</taxon>
        <taxon>Rickettsieae</taxon>
        <taxon>Rickettsia</taxon>
        <taxon>typhus group</taxon>
    </lineage>
</organism>
<dbReference type="EMBL" id="AE017197">
    <property type="protein sequence ID" value="AAU03815.1"/>
    <property type="molecule type" value="Genomic_DNA"/>
</dbReference>
<dbReference type="RefSeq" id="WP_011190799.1">
    <property type="nucleotide sequence ID" value="NC_006142.1"/>
</dbReference>
<dbReference type="SMR" id="Q68X27"/>
<dbReference type="KEGG" id="rty:RT0335"/>
<dbReference type="eggNOG" id="COG0522">
    <property type="taxonomic scope" value="Bacteria"/>
</dbReference>
<dbReference type="HOGENOM" id="CLU_092403_0_0_5"/>
<dbReference type="OrthoDB" id="9803672at2"/>
<dbReference type="Proteomes" id="UP000000604">
    <property type="component" value="Chromosome"/>
</dbReference>
<dbReference type="GO" id="GO:0015935">
    <property type="term" value="C:small ribosomal subunit"/>
    <property type="evidence" value="ECO:0007669"/>
    <property type="project" value="InterPro"/>
</dbReference>
<dbReference type="GO" id="GO:0019843">
    <property type="term" value="F:rRNA binding"/>
    <property type="evidence" value="ECO:0007669"/>
    <property type="project" value="UniProtKB-UniRule"/>
</dbReference>
<dbReference type="GO" id="GO:0003735">
    <property type="term" value="F:structural constituent of ribosome"/>
    <property type="evidence" value="ECO:0007669"/>
    <property type="project" value="InterPro"/>
</dbReference>
<dbReference type="GO" id="GO:0042274">
    <property type="term" value="P:ribosomal small subunit biogenesis"/>
    <property type="evidence" value="ECO:0007669"/>
    <property type="project" value="TreeGrafter"/>
</dbReference>
<dbReference type="GO" id="GO:0006412">
    <property type="term" value="P:translation"/>
    <property type="evidence" value="ECO:0007669"/>
    <property type="project" value="UniProtKB-UniRule"/>
</dbReference>
<dbReference type="CDD" id="cd00165">
    <property type="entry name" value="S4"/>
    <property type="match status" value="1"/>
</dbReference>
<dbReference type="FunFam" id="3.10.290.10:FF:000001">
    <property type="entry name" value="30S ribosomal protein S4"/>
    <property type="match status" value="1"/>
</dbReference>
<dbReference type="Gene3D" id="1.10.1050.10">
    <property type="entry name" value="Ribosomal Protein S4 Delta 41, Chain A, domain 1"/>
    <property type="match status" value="1"/>
</dbReference>
<dbReference type="Gene3D" id="3.10.290.10">
    <property type="entry name" value="RNA-binding S4 domain"/>
    <property type="match status" value="1"/>
</dbReference>
<dbReference type="HAMAP" id="MF_01306_B">
    <property type="entry name" value="Ribosomal_uS4_B"/>
    <property type="match status" value="1"/>
</dbReference>
<dbReference type="InterPro" id="IPR022801">
    <property type="entry name" value="Ribosomal_uS4"/>
</dbReference>
<dbReference type="InterPro" id="IPR005709">
    <property type="entry name" value="Ribosomal_uS4_bac-type"/>
</dbReference>
<dbReference type="InterPro" id="IPR018079">
    <property type="entry name" value="Ribosomal_uS4_CS"/>
</dbReference>
<dbReference type="InterPro" id="IPR001912">
    <property type="entry name" value="Ribosomal_uS4_N"/>
</dbReference>
<dbReference type="InterPro" id="IPR002942">
    <property type="entry name" value="S4_RNA-bd"/>
</dbReference>
<dbReference type="InterPro" id="IPR036986">
    <property type="entry name" value="S4_RNA-bd_sf"/>
</dbReference>
<dbReference type="NCBIfam" id="NF003717">
    <property type="entry name" value="PRK05327.1"/>
    <property type="match status" value="1"/>
</dbReference>
<dbReference type="NCBIfam" id="TIGR01017">
    <property type="entry name" value="rpsD_bact"/>
    <property type="match status" value="1"/>
</dbReference>
<dbReference type="PANTHER" id="PTHR11831">
    <property type="entry name" value="30S 40S RIBOSOMAL PROTEIN"/>
    <property type="match status" value="1"/>
</dbReference>
<dbReference type="PANTHER" id="PTHR11831:SF4">
    <property type="entry name" value="SMALL RIBOSOMAL SUBUNIT PROTEIN US4M"/>
    <property type="match status" value="1"/>
</dbReference>
<dbReference type="Pfam" id="PF00163">
    <property type="entry name" value="Ribosomal_S4"/>
    <property type="match status" value="1"/>
</dbReference>
<dbReference type="Pfam" id="PF01479">
    <property type="entry name" value="S4"/>
    <property type="match status" value="1"/>
</dbReference>
<dbReference type="SMART" id="SM01390">
    <property type="entry name" value="Ribosomal_S4"/>
    <property type="match status" value="1"/>
</dbReference>
<dbReference type="SMART" id="SM00363">
    <property type="entry name" value="S4"/>
    <property type="match status" value="1"/>
</dbReference>
<dbReference type="SUPFAM" id="SSF55174">
    <property type="entry name" value="Alpha-L RNA-binding motif"/>
    <property type="match status" value="1"/>
</dbReference>
<dbReference type="PROSITE" id="PS00632">
    <property type="entry name" value="RIBOSOMAL_S4"/>
    <property type="match status" value="1"/>
</dbReference>
<dbReference type="PROSITE" id="PS50889">
    <property type="entry name" value="S4"/>
    <property type="match status" value="1"/>
</dbReference>
<sequence length="205" mass="23337">MTKIVRSKYKASRRLGVSLWGDSKDAFNTRNYRPGQHGQNTMIKTSDYGLHLKAKQRLKCYYGRVTEKQFRNTFALAQRMQGNTGENFIGLLESRLDTVVYRMNIAPTIFAARQLVSHGHIKLNGKKADIASIRLKEGDIIEIKESIQQIPLIQESIAKQGQTTPKYLSFDVSSLTGKYLRVPALSDVPYPFEAEVHLVIELYSR</sequence>